<dbReference type="EMBL" id="CP000517">
    <property type="protein sequence ID" value="ABX26304.1"/>
    <property type="molecule type" value="Genomic_DNA"/>
</dbReference>
<dbReference type="RefSeq" id="WP_003628006.1">
    <property type="nucleotide sequence ID" value="NC_010080.1"/>
</dbReference>
<dbReference type="SMR" id="A8YW47"/>
<dbReference type="GeneID" id="83725240"/>
<dbReference type="KEGG" id="lhe:lhv_0007"/>
<dbReference type="eggNOG" id="COG0360">
    <property type="taxonomic scope" value="Bacteria"/>
</dbReference>
<dbReference type="HOGENOM" id="CLU_113441_5_3_9"/>
<dbReference type="Proteomes" id="UP000000790">
    <property type="component" value="Chromosome"/>
</dbReference>
<dbReference type="GO" id="GO:0005737">
    <property type="term" value="C:cytoplasm"/>
    <property type="evidence" value="ECO:0007669"/>
    <property type="project" value="UniProtKB-ARBA"/>
</dbReference>
<dbReference type="GO" id="GO:1990904">
    <property type="term" value="C:ribonucleoprotein complex"/>
    <property type="evidence" value="ECO:0007669"/>
    <property type="project" value="UniProtKB-KW"/>
</dbReference>
<dbReference type="GO" id="GO:0005840">
    <property type="term" value="C:ribosome"/>
    <property type="evidence" value="ECO:0007669"/>
    <property type="project" value="UniProtKB-KW"/>
</dbReference>
<dbReference type="GO" id="GO:0070181">
    <property type="term" value="F:small ribosomal subunit rRNA binding"/>
    <property type="evidence" value="ECO:0007669"/>
    <property type="project" value="TreeGrafter"/>
</dbReference>
<dbReference type="GO" id="GO:0003735">
    <property type="term" value="F:structural constituent of ribosome"/>
    <property type="evidence" value="ECO:0007669"/>
    <property type="project" value="InterPro"/>
</dbReference>
<dbReference type="GO" id="GO:0006412">
    <property type="term" value="P:translation"/>
    <property type="evidence" value="ECO:0007669"/>
    <property type="project" value="UniProtKB-UniRule"/>
</dbReference>
<dbReference type="CDD" id="cd00473">
    <property type="entry name" value="bS6"/>
    <property type="match status" value="1"/>
</dbReference>
<dbReference type="Gene3D" id="3.30.70.60">
    <property type="match status" value="1"/>
</dbReference>
<dbReference type="HAMAP" id="MF_00360">
    <property type="entry name" value="Ribosomal_bS6"/>
    <property type="match status" value="1"/>
</dbReference>
<dbReference type="InterPro" id="IPR000529">
    <property type="entry name" value="Ribosomal_bS6"/>
</dbReference>
<dbReference type="InterPro" id="IPR035980">
    <property type="entry name" value="Ribosomal_bS6_sf"/>
</dbReference>
<dbReference type="InterPro" id="IPR020814">
    <property type="entry name" value="Ribosomal_S6_plastid/chlpt"/>
</dbReference>
<dbReference type="InterPro" id="IPR014717">
    <property type="entry name" value="Transl_elong_EF1B/ribsomal_bS6"/>
</dbReference>
<dbReference type="NCBIfam" id="TIGR00166">
    <property type="entry name" value="S6"/>
    <property type="match status" value="1"/>
</dbReference>
<dbReference type="PANTHER" id="PTHR21011">
    <property type="entry name" value="MITOCHONDRIAL 28S RIBOSOMAL PROTEIN S6"/>
    <property type="match status" value="1"/>
</dbReference>
<dbReference type="PANTHER" id="PTHR21011:SF1">
    <property type="entry name" value="SMALL RIBOSOMAL SUBUNIT PROTEIN BS6M"/>
    <property type="match status" value="1"/>
</dbReference>
<dbReference type="Pfam" id="PF01250">
    <property type="entry name" value="Ribosomal_S6"/>
    <property type="match status" value="1"/>
</dbReference>
<dbReference type="SUPFAM" id="SSF54995">
    <property type="entry name" value="Ribosomal protein S6"/>
    <property type="match status" value="1"/>
</dbReference>
<proteinExistence type="inferred from homology"/>
<name>RS6_LACH4</name>
<evidence type="ECO:0000255" key="1">
    <source>
        <dbReference type="HAMAP-Rule" id="MF_00360"/>
    </source>
</evidence>
<evidence type="ECO:0000305" key="2"/>
<gene>
    <name evidence="1" type="primary">rpsF</name>
    <name type="ordered locus">lhv_0007</name>
</gene>
<reference key="1">
    <citation type="journal article" date="2008" name="J. Bacteriol.">
        <title>Genome sequence of Lactobacillus helveticus: an organism distinguished by selective gene loss and IS element expansion.</title>
        <authorList>
            <person name="Callanan M."/>
            <person name="Kaleta P."/>
            <person name="O'Callaghan J."/>
            <person name="O'Sullivan O."/>
            <person name="Jordan K."/>
            <person name="McAuliffe O."/>
            <person name="Sangrador-Vegas A."/>
            <person name="Slattery L."/>
            <person name="Fitzgerald G.F."/>
            <person name="Beresford T."/>
            <person name="Ross R.P."/>
        </authorList>
    </citation>
    <scope>NUCLEOTIDE SEQUENCE [LARGE SCALE GENOMIC DNA]</scope>
    <source>
        <strain>DPC 4571</strain>
    </source>
</reference>
<organism>
    <name type="scientific">Lactobacillus helveticus (strain DPC 4571)</name>
    <dbReference type="NCBI Taxonomy" id="405566"/>
    <lineage>
        <taxon>Bacteria</taxon>
        <taxon>Bacillati</taxon>
        <taxon>Bacillota</taxon>
        <taxon>Bacilli</taxon>
        <taxon>Lactobacillales</taxon>
        <taxon>Lactobacillaceae</taxon>
        <taxon>Lactobacillus</taxon>
    </lineage>
</organism>
<accession>A8YW47</accession>
<protein>
    <recommendedName>
        <fullName evidence="1">Small ribosomal subunit protein bS6</fullName>
    </recommendedName>
    <alternativeName>
        <fullName evidence="2">30S ribosomal protein S6</fullName>
    </alternativeName>
</protein>
<feature type="chain" id="PRO_1000079451" description="Small ribosomal subunit protein bS6">
    <location>
        <begin position="1"/>
        <end position="98"/>
    </location>
</feature>
<comment type="function">
    <text evidence="1">Binds together with bS18 to 16S ribosomal RNA.</text>
</comment>
<comment type="similarity">
    <text evidence="1">Belongs to the bacterial ribosomal protein bS6 family.</text>
</comment>
<sequence>MATTKYEVTYIIKPDVDEESKKALVENYDKVIADNGGTMVESKDWGKRRFAYEIDKYREGTYHIMTFTADNADAVNEFGRLSKIDNMILRSMTVKLDK</sequence>
<keyword id="KW-0687">Ribonucleoprotein</keyword>
<keyword id="KW-0689">Ribosomal protein</keyword>
<keyword id="KW-0694">RNA-binding</keyword>
<keyword id="KW-0699">rRNA-binding</keyword>